<dbReference type="EC" id="3.5.4.30" evidence="1"/>
<dbReference type="EMBL" id="CP000780">
    <property type="protein sequence ID" value="ABS55400.1"/>
    <property type="molecule type" value="Genomic_DNA"/>
</dbReference>
<dbReference type="RefSeq" id="WP_012106424.1">
    <property type="nucleotide sequence ID" value="NC_009712.1"/>
</dbReference>
<dbReference type="SMR" id="A7I6N9"/>
<dbReference type="STRING" id="456442.Mboo_0882"/>
<dbReference type="GeneID" id="5410763"/>
<dbReference type="KEGG" id="mbn:Mboo_0882"/>
<dbReference type="eggNOG" id="arCOG04048">
    <property type="taxonomic scope" value="Archaea"/>
</dbReference>
<dbReference type="HOGENOM" id="CLU_087476_2_1_2"/>
<dbReference type="OrthoDB" id="33242at2157"/>
<dbReference type="UniPathway" id="UPA00610">
    <property type="reaction ID" value="UER00667"/>
</dbReference>
<dbReference type="Proteomes" id="UP000002408">
    <property type="component" value="Chromosome"/>
</dbReference>
<dbReference type="GO" id="GO:0033973">
    <property type="term" value="F:dCTP deaminase (dUMP-forming) activity"/>
    <property type="evidence" value="ECO:0007669"/>
    <property type="project" value="UniProtKB-UniRule"/>
</dbReference>
<dbReference type="GO" id="GO:0008829">
    <property type="term" value="F:dCTP deaminase activity"/>
    <property type="evidence" value="ECO:0007669"/>
    <property type="project" value="InterPro"/>
</dbReference>
<dbReference type="GO" id="GO:0000166">
    <property type="term" value="F:nucleotide binding"/>
    <property type="evidence" value="ECO:0007669"/>
    <property type="project" value="UniProtKB-KW"/>
</dbReference>
<dbReference type="GO" id="GO:0006226">
    <property type="term" value="P:dUMP biosynthetic process"/>
    <property type="evidence" value="ECO:0007669"/>
    <property type="project" value="UniProtKB-UniRule"/>
</dbReference>
<dbReference type="GO" id="GO:0006229">
    <property type="term" value="P:dUTP biosynthetic process"/>
    <property type="evidence" value="ECO:0007669"/>
    <property type="project" value="InterPro"/>
</dbReference>
<dbReference type="CDD" id="cd07557">
    <property type="entry name" value="trimeric_dUTPase"/>
    <property type="match status" value="1"/>
</dbReference>
<dbReference type="Gene3D" id="2.70.40.10">
    <property type="match status" value="1"/>
</dbReference>
<dbReference type="HAMAP" id="MF_00146">
    <property type="entry name" value="dCTP_deaminase"/>
    <property type="match status" value="1"/>
</dbReference>
<dbReference type="InterPro" id="IPR011962">
    <property type="entry name" value="dCTP_deaminase"/>
</dbReference>
<dbReference type="InterPro" id="IPR036157">
    <property type="entry name" value="dUTPase-like_sf"/>
</dbReference>
<dbReference type="InterPro" id="IPR033704">
    <property type="entry name" value="dUTPase_trimeric"/>
</dbReference>
<dbReference type="NCBIfam" id="TIGR02274">
    <property type="entry name" value="dCTP_deam"/>
    <property type="match status" value="1"/>
</dbReference>
<dbReference type="PANTHER" id="PTHR42680">
    <property type="entry name" value="DCTP DEAMINASE"/>
    <property type="match status" value="1"/>
</dbReference>
<dbReference type="PANTHER" id="PTHR42680:SF3">
    <property type="entry name" value="DCTP DEAMINASE"/>
    <property type="match status" value="1"/>
</dbReference>
<dbReference type="Pfam" id="PF22769">
    <property type="entry name" value="DCD"/>
    <property type="match status" value="1"/>
</dbReference>
<dbReference type="SUPFAM" id="SSF51283">
    <property type="entry name" value="dUTPase-like"/>
    <property type="match status" value="1"/>
</dbReference>
<sequence>MILVDWQLRDRIARGHIRIDPFDPALVQPNSIDIRLGNHFVWYAPGKQVIDPYDKTTVTSGVEGKHADFFDLLPGQFVLAETLECISLPDNIVATIEGKSSIARLGVTLHQTGGWIDAGFRGSITLEMANVNARPVRVYAGMPIGQLVFYTTERAENPYDKKADAKYLDQRQATLSKYHENRK</sequence>
<protein>
    <recommendedName>
        <fullName evidence="1">dCTP deaminase, dUMP-forming</fullName>
        <ecNumber evidence="1">3.5.4.30</ecNumber>
    </recommendedName>
    <alternativeName>
        <fullName evidence="1">Bifunctional dCTP deaminase:dUTPase</fullName>
    </alternativeName>
    <alternativeName>
        <fullName evidence="1">DCD-DUT</fullName>
    </alternativeName>
</protein>
<proteinExistence type="inferred from homology"/>
<evidence type="ECO:0000255" key="1">
    <source>
        <dbReference type="HAMAP-Rule" id="MF_00146"/>
    </source>
</evidence>
<feature type="chain" id="PRO_1000117981" description="dCTP deaminase, dUMP-forming">
    <location>
        <begin position="1"/>
        <end position="183"/>
    </location>
</feature>
<feature type="active site" description="Proton donor/acceptor" evidence="1">
    <location>
        <position position="127"/>
    </location>
</feature>
<feature type="binding site" evidence="1">
    <location>
        <begin position="99"/>
        <end position="104"/>
    </location>
    <ligand>
        <name>dCTP</name>
        <dbReference type="ChEBI" id="CHEBI:61481"/>
    </ligand>
</feature>
<feature type="binding site" evidence="1">
    <location>
        <position position="117"/>
    </location>
    <ligand>
        <name>dCTP</name>
        <dbReference type="ChEBI" id="CHEBI:61481"/>
    </ligand>
</feature>
<feature type="binding site" evidence="1">
    <location>
        <begin position="125"/>
        <end position="127"/>
    </location>
    <ligand>
        <name>dCTP</name>
        <dbReference type="ChEBI" id="CHEBI:61481"/>
    </ligand>
</feature>
<feature type="binding site" evidence="1">
    <location>
        <position position="146"/>
    </location>
    <ligand>
        <name>dCTP</name>
        <dbReference type="ChEBI" id="CHEBI:61481"/>
    </ligand>
</feature>
<feature type="binding site" evidence="1">
    <location>
        <position position="159"/>
    </location>
    <ligand>
        <name>dCTP</name>
        <dbReference type="ChEBI" id="CHEBI:61481"/>
    </ligand>
</feature>
<feature type="binding site" evidence="1">
    <location>
        <position position="166"/>
    </location>
    <ligand>
        <name>dCTP</name>
        <dbReference type="ChEBI" id="CHEBI:61481"/>
    </ligand>
</feature>
<feature type="binding site" evidence="1">
    <location>
        <position position="170"/>
    </location>
    <ligand>
        <name>dCTP</name>
        <dbReference type="ChEBI" id="CHEBI:61481"/>
    </ligand>
</feature>
<feature type="site" description="Important for bifunctional activity" evidence="1">
    <location>
        <begin position="114"/>
        <end position="115"/>
    </location>
</feature>
<comment type="function">
    <text evidence="1">Bifunctional enzyme that catalyzes both the deamination of dCTP to dUTP and the hydrolysis of dUTP to dUMP without releasing the toxic dUTP intermediate.</text>
</comment>
<comment type="catalytic activity">
    <reaction evidence="1">
        <text>dCTP + 2 H2O = dUMP + NH4(+) + diphosphate</text>
        <dbReference type="Rhea" id="RHEA:19205"/>
        <dbReference type="ChEBI" id="CHEBI:15377"/>
        <dbReference type="ChEBI" id="CHEBI:28938"/>
        <dbReference type="ChEBI" id="CHEBI:33019"/>
        <dbReference type="ChEBI" id="CHEBI:61481"/>
        <dbReference type="ChEBI" id="CHEBI:246422"/>
        <dbReference type="EC" id="3.5.4.30"/>
    </reaction>
</comment>
<comment type="pathway">
    <text evidence="1">Pyrimidine metabolism; dUMP biosynthesis; dUMP from dCTP: step 1/1.</text>
</comment>
<comment type="subunit">
    <text evidence="1">Homotrimer.</text>
</comment>
<comment type="similarity">
    <text evidence="1">Belongs to the dCTP deaminase family.</text>
</comment>
<organism>
    <name type="scientific">Methanoregula boonei (strain DSM 21154 / JCM 14090 / 6A8)</name>
    <dbReference type="NCBI Taxonomy" id="456442"/>
    <lineage>
        <taxon>Archaea</taxon>
        <taxon>Methanobacteriati</taxon>
        <taxon>Methanobacteriota</taxon>
        <taxon>Stenosarchaea group</taxon>
        <taxon>Methanomicrobia</taxon>
        <taxon>Methanomicrobiales</taxon>
        <taxon>Methanoregulaceae</taxon>
        <taxon>Methanoregula</taxon>
    </lineage>
</organism>
<name>DCDB_METB6</name>
<accession>A7I6N9</accession>
<gene>
    <name evidence="1" type="primary">dcd</name>
    <name type="ordered locus">Mboo_0882</name>
</gene>
<reference key="1">
    <citation type="journal article" date="2015" name="Microbiology">
        <title>Genome of Methanoregula boonei 6A8 reveals adaptations to oligotrophic peatland environments.</title>
        <authorList>
            <person name="Braeuer S."/>
            <person name="Cadillo-Quiroz H."/>
            <person name="Kyrpides N."/>
            <person name="Woyke T."/>
            <person name="Goodwin L."/>
            <person name="Detter C."/>
            <person name="Podell S."/>
            <person name="Yavitt J.B."/>
            <person name="Zinder S.H."/>
        </authorList>
    </citation>
    <scope>NUCLEOTIDE SEQUENCE [LARGE SCALE GENOMIC DNA]</scope>
    <source>
        <strain>DSM 21154 / JCM 14090 / 6A8</strain>
    </source>
</reference>
<keyword id="KW-0378">Hydrolase</keyword>
<keyword id="KW-0546">Nucleotide metabolism</keyword>
<keyword id="KW-0547">Nucleotide-binding</keyword>
<keyword id="KW-1185">Reference proteome</keyword>